<proteinExistence type="evidence at protein level"/>
<evidence type="ECO:0000250" key="1">
    <source>
        <dbReference type="UniProtKB" id="P06900"/>
    </source>
</evidence>
<evidence type="ECO:0000250" key="2">
    <source>
        <dbReference type="UniProtKB" id="P0C1H4"/>
    </source>
</evidence>
<evidence type="ECO:0000250" key="3">
    <source>
        <dbReference type="UniProtKB" id="P33778"/>
    </source>
</evidence>
<evidence type="ECO:0000256" key="4">
    <source>
        <dbReference type="SAM" id="MobiDB-lite"/>
    </source>
</evidence>
<evidence type="ECO:0000269" key="5">
    <source ref="1"/>
</evidence>
<evidence type="ECO:0000305" key="6"/>
<keyword id="KW-0007">Acetylation</keyword>
<keyword id="KW-0158">Chromosome</keyword>
<keyword id="KW-0903">Direct protein sequencing</keyword>
<keyword id="KW-0238">DNA-binding</keyword>
<keyword id="KW-0544">Nucleosome core</keyword>
<keyword id="KW-0539">Nucleus</keyword>
<keyword id="KW-0597">Phosphoprotein</keyword>
<keyword id="KW-1185">Reference proteome</keyword>
<keyword id="KW-0832">Ubl conjugation</keyword>
<dbReference type="Proteomes" id="UP000694384">
    <property type="component" value="Unplaced"/>
</dbReference>
<dbReference type="Proteomes" id="UP000694427">
    <property type="component" value="Unplaced"/>
</dbReference>
<dbReference type="Proteomes" id="UP000694700">
    <property type="component" value="Unplaced"/>
</dbReference>
<dbReference type="Proteomes" id="UP000694701">
    <property type="component" value="Unplaced"/>
</dbReference>
<dbReference type="Proteomes" id="UP001155660">
    <property type="component" value="Unplaced"/>
</dbReference>
<dbReference type="GO" id="GO:0000786">
    <property type="term" value="C:nucleosome"/>
    <property type="evidence" value="ECO:0007669"/>
    <property type="project" value="UniProtKB-KW"/>
</dbReference>
<dbReference type="GO" id="GO:0005634">
    <property type="term" value="C:nucleus"/>
    <property type="evidence" value="ECO:0007669"/>
    <property type="project" value="UniProtKB-SubCell"/>
</dbReference>
<dbReference type="GO" id="GO:0003677">
    <property type="term" value="F:DNA binding"/>
    <property type="evidence" value="ECO:0007669"/>
    <property type="project" value="UniProtKB-KW"/>
</dbReference>
<organism evidence="6">
    <name type="scientific">Cyprinus carpio</name>
    <name type="common">Common carp</name>
    <dbReference type="NCBI Taxonomy" id="7962"/>
    <lineage>
        <taxon>Eukaryota</taxon>
        <taxon>Metazoa</taxon>
        <taxon>Chordata</taxon>
        <taxon>Craniata</taxon>
        <taxon>Vertebrata</taxon>
        <taxon>Euteleostomi</taxon>
        <taxon>Actinopterygii</taxon>
        <taxon>Neopterygii</taxon>
        <taxon>Teleostei</taxon>
        <taxon>Ostariophysi</taxon>
        <taxon>Cypriniformes</taxon>
        <taxon>Cyprinidae</taxon>
        <taxon>Cyprininae</taxon>
        <taxon>Cyprinus</taxon>
    </lineage>
</organism>
<sequence length="29" mass="3139">MPEPAKSAPKKGSTRTAAKGGKKRRKSRK</sequence>
<comment type="function">
    <text>Core component of nucleosome. Nucleosomes wrap and compact DNA into chromatin, limiting DNA accessibility to the cellular machineries which require DNA as a template. Histones thereby play a central role in transcription regulation, DNA repair, DNA replication and chromosomal stability. DNA accessibility is regulated via a complex set of post-translational modifications of histones, also called histone code, and nucleosome remodeling.</text>
</comment>
<comment type="subunit">
    <text>The nucleosome is a histone octamer containing two molecules each of H2A, H2B, H3 and H4 assembled in one H3-H4 heterotetramer and two H2A-H2B heterodimers. The octamer wraps approximately 147 bp of DNA.</text>
</comment>
<comment type="subcellular location">
    <subcellularLocation>
        <location>Nucleus</location>
    </subcellularLocation>
    <subcellularLocation>
        <location>Chromosome</location>
    </subcellularLocation>
</comment>
<comment type="PTM">
    <text evidence="3">Monoubiquitination at the C-terminal Lys gives a specific tag for epigenetic transcriptional activation and is also prerequisite for histone H3 'Lys-4' and 'Lys-79' methylation.</text>
</comment>
<comment type="PTM">
    <text evidence="1">Phosphorylated during apoptosis; which facilitates apoptotic chromatin condensation.</text>
</comment>
<comment type="similarity">
    <text evidence="6">Belongs to the histone H2B family.</text>
</comment>
<name>H2B_CYPCA</name>
<feature type="initiator methionine" description="Removed" evidence="5">
    <location>
        <position position="1"/>
    </location>
</feature>
<feature type="chain" id="PRO_0000071848" description="Histone H2B">
    <location>
        <begin position="2"/>
        <end position="29" status="greater than"/>
    </location>
</feature>
<feature type="region of interest" description="Disordered" evidence="4">
    <location>
        <begin position="1"/>
        <end position="29"/>
    </location>
</feature>
<feature type="compositionally biased region" description="Basic residues" evidence="4">
    <location>
        <begin position="20"/>
        <end position="29"/>
    </location>
</feature>
<feature type="modified residue" description="N6-acetyllysine" evidence="2">
    <location>
        <position position="6"/>
    </location>
</feature>
<feature type="modified residue" description="N6-acetyllysine" evidence="2">
    <location>
        <position position="11"/>
    </location>
</feature>
<feature type="modified residue" description="Phosphoserine" evidence="1">
    <location>
        <position position="13"/>
    </location>
</feature>
<feature type="non-terminal residue">
    <location>
        <position position="29"/>
    </location>
</feature>
<protein>
    <recommendedName>
        <fullName>Histone H2B</fullName>
    </recommendedName>
</protein>
<reference evidence="6" key="1">
    <citation type="journal article" date="2004" name="Fish Physiol. Biochem.">
        <title>Extranuclear histones in teleost gills: an evolutionary study.</title>
        <authorList>
            <person name="Schuurmans Stekhoven F.M.A.H."/>
            <person name="Wendelaar Bonga S.E."/>
            <person name="Flik G."/>
        </authorList>
    </citation>
    <scope>PROTEIN SEQUENCE OF 2-29</scope>
    <source>
        <tissue>Gill</tissue>
    </source>
</reference>
<accession>P83837</accession>